<protein>
    <recommendedName>
        <fullName evidence="1">Large ribosomal subunit protein uL5</fullName>
    </recommendedName>
    <alternativeName>
        <fullName evidence="2">50S ribosomal protein L5</fullName>
    </alternativeName>
</protein>
<keyword id="KW-1185">Reference proteome</keyword>
<keyword id="KW-0687">Ribonucleoprotein</keyword>
<keyword id="KW-0689">Ribosomal protein</keyword>
<keyword id="KW-0694">RNA-binding</keyword>
<keyword id="KW-0699">rRNA-binding</keyword>
<keyword id="KW-0820">tRNA-binding</keyword>
<reference key="1">
    <citation type="journal article" date="2006" name="Proc. Natl. Acad. Sci. U.S.A.">
        <title>Comparative genomics of the lactic acid bacteria.</title>
        <authorList>
            <person name="Makarova K.S."/>
            <person name="Slesarev A."/>
            <person name="Wolf Y.I."/>
            <person name="Sorokin A."/>
            <person name="Mirkin B."/>
            <person name="Koonin E.V."/>
            <person name="Pavlov A."/>
            <person name="Pavlova N."/>
            <person name="Karamychev V."/>
            <person name="Polouchine N."/>
            <person name="Shakhova V."/>
            <person name="Grigoriev I."/>
            <person name="Lou Y."/>
            <person name="Rohksar D."/>
            <person name="Lucas S."/>
            <person name="Huang K."/>
            <person name="Goodstein D.M."/>
            <person name="Hawkins T."/>
            <person name="Plengvidhya V."/>
            <person name="Welker D."/>
            <person name="Hughes J."/>
            <person name="Goh Y."/>
            <person name="Benson A."/>
            <person name="Baldwin K."/>
            <person name="Lee J.-H."/>
            <person name="Diaz-Muniz I."/>
            <person name="Dosti B."/>
            <person name="Smeianov V."/>
            <person name="Wechter W."/>
            <person name="Barabote R."/>
            <person name="Lorca G."/>
            <person name="Altermann E."/>
            <person name="Barrangou R."/>
            <person name="Ganesan B."/>
            <person name="Xie Y."/>
            <person name="Rawsthorne H."/>
            <person name="Tamir D."/>
            <person name="Parker C."/>
            <person name="Breidt F."/>
            <person name="Broadbent J.R."/>
            <person name="Hutkins R."/>
            <person name="O'Sullivan D."/>
            <person name="Steele J."/>
            <person name="Unlu G."/>
            <person name="Saier M.H. Jr."/>
            <person name="Klaenhammer T."/>
            <person name="Richardson P."/>
            <person name="Kozyavkin S."/>
            <person name="Weimer B.C."/>
            <person name="Mills D.A."/>
        </authorList>
    </citation>
    <scope>NUCLEOTIDE SEQUENCE [LARGE SCALE GENOMIC DNA]</scope>
    <source>
        <strain>ATCC BAA-331 / PSU-1</strain>
    </source>
</reference>
<comment type="function">
    <text evidence="1">This is one of the proteins that bind and probably mediate the attachment of the 5S RNA into the large ribosomal subunit, where it forms part of the central protuberance. In the 70S ribosome it contacts protein S13 of the 30S subunit (bridge B1b), connecting the 2 subunits; this bridge is implicated in subunit movement. Contacts the P site tRNA; the 5S rRNA and some of its associated proteins might help stabilize positioning of ribosome-bound tRNAs.</text>
</comment>
<comment type="subunit">
    <text evidence="1">Part of the 50S ribosomal subunit; part of the 5S rRNA/L5/L18/L25 subcomplex. Contacts the 5S rRNA and the P site tRNA. Forms a bridge to the 30S subunit in the 70S ribosome.</text>
</comment>
<comment type="similarity">
    <text evidence="1">Belongs to the universal ribosomal protein uL5 family.</text>
</comment>
<dbReference type="EMBL" id="CP000411">
    <property type="protein sequence ID" value="ABJ56549.1"/>
    <property type="molecule type" value="Genomic_DNA"/>
</dbReference>
<dbReference type="RefSeq" id="WP_002816349.1">
    <property type="nucleotide sequence ID" value="NC_008528.1"/>
</dbReference>
<dbReference type="SMR" id="Q04G73"/>
<dbReference type="STRING" id="203123.OEOE_0607"/>
<dbReference type="GeneID" id="75065429"/>
<dbReference type="KEGG" id="ooe:OEOE_0607"/>
<dbReference type="eggNOG" id="COG0094">
    <property type="taxonomic scope" value="Bacteria"/>
</dbReference>
<dbReference type="HOGENOM" id="CLU_061015_2_1_9"/>
<dbReference type="Proteomes" id="UP000000774">
    <property type="component" value="Chromosome"/>
</dbReference>
<dbReference type="GO" id="GO:1990904">
    <property type="term" value="C:ribonucleoprotein complex"/>
    <property type="evidence" value="ECO:0007669"/>
    <property type="project" value="UniProtKB-KW"/>
</dbReference>
<dbReference type="GO" id="GO:0005840">
    <property type="term" value="C:ribosome"/>
    <property type="evidence" value="ECO:0007669"/>
    <property type="project" value="UniProtKB-KW"/>
</dbReference>
<dbReference type="GO" id="GO:0019843">
    <property type="term" value="F:rRNA binding"/>
    <property type="evidence" value="ECO:0007669"/>
    <property type="project" value="UniProtKB-UniRule"/>
</dbReference>
<dbReference type="GO" id="GO:0003735">
    <property type="term" value="F:structural constituent of ribosome"/>
    <property type="evidence" value="ECO:0007669"/>
    <property type="project" value="InterPro"/>
</dbReference>
<dbReference type="GO" id="GO:0000049">
    <property type="term" value="F:tRNA binding"/>
    <property type="evidence" value="ECO:0007669"/>
    <property type="project" value="UniProtKB-UniRule"/>
</dbReference>
<dbReference type="GO" id="GO:0006412">
    <property type="term" value="P:translation"/>
    <property type="evidence" value="ECO:0007669"/>
    <property type="project" value="UniProtKB-UniRule"/>
</dbReference>
<dbReference type="FunFam" id="3.30.1440.10:FF:000001">
    <property type="entry name" value="50S ribosomal protein L5"/>
    <property type="match status" value="1"/>
</dbReference>
<dbReference type="Gene3D" id="3.30.1440.10">
    <property type="match status" value="1"/>
</dbReference>
<dbReference type="HAMAP" id="MF_01333_B">
    <property type="entry name" value="Ribosomal_uL5_B"/>
    <property type="match status" value="1"/>
</dbReference>
<dbReference type="InterPro" id="IPR002132">
    <property type="entry name" value="Ribosomal_uL5"/>
</dbReference>
<dbReference type="InterPro" id="IPR020930">
    <property type="entry name" value="Ribosomal_uL5_bac-type"/>
</dbReference>
<dbReference type="InterPro" id="IPR031309">
    <property type="entry name" value="Ribosomal_uL5_C"/>
</dbReference>
<dbReference type="InterPro" id="IPR020929">
    <property type="entry name" value="Ribosomal_uL5_CS"/>
</dbReference>
<dbReference type="InterPro" id="IPR022803">
    <property type="entry name" value="Ribosomal_uL5_dom_sf"/>
</dbReference>
<dbReference type="InterPro" id="IPR031310">
    <property type="entry name" value="Ribosomal_uL5_N"/>
</dbReference>
<dbReference type="NCBIfam" id="NF000585">
    <property type="entry name" value="PRK00010.1"/>
    <property type="match status" value="1"/>
</dbReference>
<dbReference type="PANTHER" id="PTHR11994">
    <property type="entry name" value="60S RIBOSOMAL PROTEIN L11-RELATED"/>
    <property type="match status" value="1"/>
</dbReference>
<dbReference type="Pfam" id="PF00281">
    <property type="entry name" value="Ribosomal_L5"/>
    <property type="match status" value="1"/>
</dbReference>
<dbReference type="Pfam" id="PF00673">
    <property type="entry name" value="Ribosomal_L5_C"/>
    <property type="match status" value="1"/>
</dbReference>
<dbReference type="PIRSF" id="PIRSF002161">
    <property type="entry name" value="Ribosomal_L5"/>
    <property type="match status" value="1"/>
</dbReference>
<dbReference type="SUPFAM" id="SSF55282">
    <property type="entry name" value="RL5-like"/>
    <property type="match status" value="1"/>
</dbReference>
<dbReference type="PROSITE" id="PS00358">
    <property type="entry name" value="RIBOSOMAL_L5"/>
    <property type="match status" value="1"/>
</dbReference>
<proteinExistence type="inferred from homology"/>
<accession>Q04G73</accession>
<feature type="chain" id="PRO_1000052786" description="Large ribosomal subunit protein uL5">
    <location>
        <begin position="1"/>
        <end position="180"/>
    </location>
</feature>
<evidence type="ECO:0000255" key="1">
    <source>
        <dbReference type="HAMAP-Rule" id="MF_01333"/>
    </source>
</evidence>
<evidence type="ECO:0000305" key="2"/>
<gene>
    <name evidence="1" type="primary">rplE</name>
    <name type="ordered locus">OEOE_0607</name>
</gene>
<sequence>MVNALKEKYVNEVRPALISKFDYTSLMQAPKLEKIVLNMGVGDAVTNSNNLDEAVSELRLIAGQQPVVTKAKKSIAGFRLREGMSIGSKVTLRGTRMYDFLDKLINVALPRVRDFHGTSTKSFDGRGNYTLGIKEQLIFPEINYDDVNRVRGLDIVIVTTAKTDEEGLELLSQLGMPFAK</sequence>
<name>RL5_OENOB</name>
<organism>
    <name type="scientific">Oenococcus oeni (strain ATCC BAA-331 / PSU-1)</name>
    <dbReference type="NCBI Taxonomy" id="203123"/>
    <lineage>
        <taxon>Bacteria</taxon>
        <taxon>Bacillati</taxon>
        <taxon>Bacillota</taxon>
        <taxon>Bacilli</taxon>
        <taxon>Lactobacillales</taxon>
        <taxon>Lactobacillaceae</taxon>
        <taxon>Oenococcus</taxon>
    </lineage>
</organism>